<reference key="1">
    <citation type="journal article" date="2001" name="Nature">
        <title>Genome sequence of enterohaemorrhagic Escherichia coli O157:H7.</title>
        <authorList>
            <person name="Perna N.T."/>
            <person name="Plunkett G. III"/>
            <person name="Burland V."/>
            <person name="Mau B."/>
            <person name="Glasner J.D."/>
            <person name="Rose D.J."/>
            <person name="Mayhew G.F."/>
            <person name="Evans P.S."/>
            <person name="Gregor J."/>
            <person name="Kirkpatrick H.A."/>
            <person name="Posfai G."/>
            <person name="Hackett J."/>
            <person name="Klink S."/>
            <person name="Boutin A."/>
            <person name="Shao Y."/>
            <person name="Miller L."/>
            <person name="Grotbeck E.J."/>
            <person name="Davis N.W."/>
            <person name="Lim A."/>
            <person name="Dimalanta E.T."/>
            <person name="Potamousis K."/>
            <person name="Apodaca J."/>
            <person name="Anantharaman T.S."/>
            <person name="Lin J."/>
            <person name="Yen G."/>
            <person name="Schwartz D.C."/>
            <person name="Welch R.A."/>
            <person name="Blattner F.R."/>
        </authorList>
    </citation>
    <scope>NUCLEOTIDE SEQUENCE [LARGE SCALE GENOMIC DNA]</scope>
    <source>
        <strain>O157:H7 / EDL933 / ATCC 700927 / EHEC</strain>
    </source>
</reference>
<reference key="2">
    <citation type="journal article" date="2001" name="DNA Res.">
        <title>Complete genome sequence of enterohemorrhagic Escherichia coli O157:H7 and genomic comparison with a laboratory strain K-12.</title>
        <authorList>
            <person name="Hayashi T."/>
            <person name="Makino K."/>
            <person name="Ohnishi M."/>
            <person name="Kurokawa K."/>
            <person name="Ishii K."/>
            <person name="Yokoyama K."/>
            <person name="Han C.-G."/>
            <person name="Ohtsubo E."/>
            <person name="Nakayama K."/>
            <person name="Murata T."/>
            <person name="Tanaka M."/>
            <person name="Tobe T."/>
            <person name="Iida T."/>
            <person name="Takami H."/>
            <person name="Honda T."/>
            <person name="Sasakawa C."/>
            <person name="Ogasawara N."/>
            <person name="Yasunaga T."/>
            <person name="Kuhara S."/>
            <person name="Shiba T."/>
            <person name="Hattori M."/>
            <person name="Shinagawa H."/>
        </authorList>
    </citation>
    <scope>NUCLEOTIDE SEQUENCE [LARGE SCALE GENOMIC DNA]</scope>
    <source>
        <strain>O157:H7 / Sakai / RIMD 0509952 / EHEC</strain>
    </source>
</reference>
<name>YCCT_ECO57</name>
<sequence>MKTGIVTTLIALCLPVSVFATTLRLSTDVDLLVLDGKKVSSSLLRGADSIELDNGPHQLVFRVEKTIHLSNSEERLYISPPLVVSFNTQLINQVNFRLPRLENEREANHFDAAPRLELLDGDATPIPVKLDILAITSTAKTIDYEVEVERYNKSAKRASLPQFATMMADDSTLLSGVSELDAIPPQSQVLTEQRLKYWFKLADPQTRNTFLQWAEKQPSS</sequence>
<gene>
    <name type="primary">yccT</name>
    <name type="ordered locus">Z1315</name>
    <name type="ordered locus">ECs1048</name>
</gene>
<protein>
    <recommendedName>
        <fullName>UPF0319 protein YccT</fullName>
    </recommendedName>
</protein>
<dbReference type="EMBL" id="AE005174">
    <property type="protein sequence ID" value="AAG55450.1"/>
    <property type="molecule type" value="Genomic_DNA"/>
</dbReference>
<dbReference type="EMBL" id="BA000007">
    <property type="protein sequence ID" value="BAB34471.1"/>
    <property type="molecule type" value="Genomic_DNA"/>
</dbReference>
<dbReference type="PIR" id="F85623">
    <property type="entry name" value="F85623"/>
</dbReference>
<dbReference type="PIR" id="H90759">
    <property type="entry name" value="H90759"/>
</dbReference>
<dbReference type="RefSeq" id="NP_309075.1">
    <property type="nucleotide sequence ID" value="NC_002695.1"/>
</dbReference>
<dbReference type="RefSeq" id="WP_000847791.1">
    <property type="nucleotide sequence ID" value="NZ_VOAI01000006.1"/>
</dbReference>
<dbReference type="STRING" id="155864.Z1315"/>
<dbReference type="GeneID" id="912544"/>
<dbReference type="KEGG" id="ece:Z1315"/>
<dbReference type="KEGG" id="ecs:ECs_1048"/>
<dbReference type="PATRIC" id="fig|386585.9.peg.1172"/>
<dbReference type="eggNOG" id="COG3110">
    <property type="taxonomic scope" value="Bacteria"/>
</dbReference>
<dbReference type="HOGENOM" id="CLU_073782_2_0_6"/>
<dbReference type="OMA" id="MQIGRDY"/>
<dbReference type="Proteomes" id="UP000000558">
    <property type="component" value="Chromosome"/>
</dbReference>
<dbReference type="Proteomes" id="UP000002519">
    <property type="component" value="Chromosome"/>
</dbReference>
<dbReference type="HAMAP" id="MF_00789">
    <property type="entry name" value="UPF0319"/>
    <property type="match status" value="1"/>
</dbReference>
<dbReference type="InterPro" id="IPR018635">
    <property type="entry name" value="UPF0319"/>
</dbReference>
<dbReference type="NCBIfam" id="NF047712">
    <property type="entry name" value="CrliSynInhib"/>
    <property type="match status" value="1"/>
</dbReference>
<dbReference type="NCBIfam" id="NF002967">
    <property type="entry name" value="PRK03641.1"/>
    <property type="match status" value="1"/>
</dbReference>
<dbReference type="PANTHER" id="PTHR38108">
    <property type="entry name" value="UPF0319 PROTEIN YCCT"/>
    <property type="match status" value="1"/>
</dbReference>
<dbReference type="PANTHER" id="PTHR38108:SF1">
    <property type="entry name" value="UPF0319 PROTEIN YCCT"/>
    <property type="match status" value="1"/>
</dbReference>
<dbReference type="Pfam" id="PF09829">
    <property type="entry name" value="DUF2057"/>
    <property type="match status" value="1"/>
</dbReference>
<keyword id="KW-1185">Reference proteome</keyword>
<keyword id="KW-0732">Signal</keyword>
<comment type="similarity">
    <text evidence="2">Belongs to the UPF0319 family.</text>
</comment>
<evidence type="ECO:0000255" key="1"/>
<evidence type="ECO:0000305" key="2"/>
<accession>P0A8X6</accession>
<accession>P75873</accession>
<feature type="signal peptide" evidence="1">
    <location>
        <begin position="1"/>
        <end position="20"/>
    </location>
</feature>
<feature type="chain" id="PRO_0000036296" description="UPF0319 protein YccT">
    <location>
        <begin position="21"/>
        <end position="220"/>
    </location>
</feature>
<proteinExistence type="inferred from homology"/>
<organism>
    <name type="scientific">Escherichia coli O157:H7</name>
    <dbReference type="NCBI Taxonomy" id="83334"/>
    <lineage>
        <taxon>Bacteria</taxon>
        <taxon>Pseudomonadati</taxon>
        <taxon>Pseudomonadota</taxon>
        <taxon>Gammaproteobacteria</taxon>
        <taxon>Enterobacterales</taxon>
        <taxon>Enterobacteriaceae</taxon>
        <taxon>Escherichia</taxon>
    </lineage>
</organism>